<name>ISPE_PSYIN</name>
<accession>A1STD9</accession>
<evidence type="ECO:0000255" key="1">
    <source>
        <dbReference type="HAMAP-Rule" id="MF_00061"/>
    </source>
</evidence>
<gene>
    <name evidence="1" type="primary">ispE</name>
    <name type="ordered locus">Ping_0912</name>
</gene>
<feature type="chain" id="PRO_1000007880" description="4-diphosphocytidyl-2-C-methyl-D-erythritol kinase">
    <location>
        <begin position="1"/>
        <end position="284"/>
    </location>
</feature>
<feature type="active site" evidence="1">
    <location>
        <position position="14"/>
    </location>
</feature>
<feature type="active site" evidence="1">
    <location>
        <position position="139"/>
    </location>
</feature>
<feature type="binding site" evidence="1">
    <location>
        <begin position="97"/>
        <end position="107"/>
    </location>
    <ligand>
        <name>ATP</name>
        <dbReference type="ChEBI" id="CHEBI:30616"/>
    </ligand>
</feature>
<proteinExistence type="inferred from homology"/>
<dbReference type="EC" id="2.7.1.148" evidence="1"/>
<dbReference type="EMBL" id="CP000510">
    <property type="protein sequence ID" value="ABM02754.1"/>
    <property type="molecule type" value="Genomic_DNA"/>
</dbReference>
<dbReference type="RefSeq" id="WP_011769317.1">
    <property type="nucleotide sequence ID" value="NC_008709.1"/>
</dbReference>
<dbReference type="SMR" id="A1STD9"/>
<dbReference type="STRING" id="357804.Ping_0912"/>
<dbReference type="KEGG" id="pin:Ping_0912"/>
<dbReference type="eggNOG" id="COG1947">
    <property type="taxonomic scope" value="Bacteria"/>
</dbReference>
<dbReference type="HOGENOM" id="CLU_053057_3_0_6"/>
<dbReference type="OrthoDB" id="9809438at2"/>
<dbReference type="UniPathway" id="UPA00056">
    <property type="reaction ID" value="UER00094"/>
</dbReference>
<dbReference type="Proteomes" id="UP000000639">
    <property type="component" value="Chromosome"/>
</dbReference>
<dbReference type="GO" id="GO:0050515">
    <property type="term" value="F:4-(cytidine 5'-diphospho)-2-C-methyl-D-erythritol kinase activity"/>
    <property type="evidence" value="ECO:0007669"/>
    <property type="project" value="UniProtKB-UniRule"/>
</dbReference>
<dbReference type="GO" id="GO:0005524">
    <property type="term" value="F:ATP binding"/>
    <property type="evidence" value="ECO:0007669"/>
    <property type="project" value="UniProtKB-UniRule"/>
</dbReference>
<dbReference type="GO" id="GO:0019288">
    <property type="term" value="P:isopentenyl diphosphate biosynthetic process, methylerythritol 4-phosphate pathway"/>
    <property type="evidence" value="ECO:0007669"/>
    <property type="project" value="UniProtKB-UniRule"/>
</dbReference>
<dbReference type="GO" id="GO:0016114">
    <property type="term" value="P:terpenoid biosynthetic process"/>
    <property type="evidence" value="ECO:0007669"/>
    <property type="project" value="InterPro"/>
</dbReference>
<dbReference type="Gene3D" id="3.30.230.10">
    <property type="match status" value="1"/>
</dbReference>
<dbReference type="Gene3D" id="3.30.70.890">
    <property type="entry name" value="GHMP kinase, C-terminal domain"/>
    <property type="match status" value="1"/>
</dbReference>
<dbReference type="HAMAP" id="MF_00061">
    <property type="entry name" value="IspE"/>
    <property type="match status" value="1"/>
</dbReference>
<dbReference type="InterPro" id="IPR013750">
    <property type="entry name" value="GHMP_kinase_C_dom"/>
</dbReference>
<dbReference type="InterPro" id="IPR036554">
    <property type="entry name" value="GHMP_kinase_C_sf"/>
</dbReference>
<dbReference type="InterPro" id="IPR006204">
    <property type="entry name" value="GHMP_kinase_N_dom"/>
</dbReference>
<dbReference type="InterPro" id="IPR004424">
    <property type="entry name" value="IspE"/>
</dbReference>
<dbReference type="InterPro" id="IPR020568">
    <property type="entry name" value="Ribosomal_Su5_D2-typ_SF"/>
</dbReference>
<dbReference type="InterPro" id="IPR014721">
    <property type="entry name" value="Ribsml_uS5_D2-typ_fold_subgr"/>
</dbReference>
<dbReference type="NCBIfam" id="TIGR00154">
    <property type="entry name" value="ispE"/>
    <property type="match status" value="1"/>
</dbReference>
<dbReference type="PANTHER" id="PTHR43527">
    <property type="entry name" value="4-DIPHOSPHOCYTIDYL-2-C-METHYL-D-ERYTHRITOL KINASE, CHLOROPLASTIC"/>
    <property type="match status" value="1"/>
</dbReference>
<dbReference type="PANTHER" id="PTHR43527:SF2">
    <property type="entry name" value="4-DIPHOSPHOCYTIDYL-2-C-METHYL-D-ERYTHRITOL KINASE, CHLOROPLASTIC"/>
    <property type="match status" value="1"/>
</dbReference>
<dbReference type="Pfam" id="PF08544">
    <property type="entry name" value="GHMP_kinases_C"/>
    <property type="match status" value="1"/>
</dbReference>
<dbReference type="Pfam" id="PF00288">
    <property type="entry name" value="GHMP_kinases_N"/>
    <property type="match status" value="1"/>
</dbReference>
<dbReference type="PIRSF" id="PIRSF010376">
    <property type="entry name" value="IspE"/>
    <property type="match status" value="1"/>
</dbReference>
<dbReference type="SUPFAM" id="SSF55060">
    <property type="entry name" value="GHMP Kinase, C-terminal domain"/>
    <property type="match status" value="1"/>
</dbReference>
<dbReference type="SUPFAM" id="SSF54211">
    <property type="entry name" value="Ribosomal protein S5 domain 2-like"/>
    <property type="match status" value="1"/>
</dbReference>
<organism>
    <name type="scientific">Psychromonas ingrahamii (strain DSM 17664 / CCUG 51855 / 37)</name>
    <dbReference type="NCBI Taxonomy" id="357804"/>
    <lineage>
        <taxon>Bacteria</taxon>
        <taxon>Pseudomonadati</taxon>
        <taxon>Pseudomonadota</taxon>
        <taxon>Gammaproteobacteria</taxon>
        <taxon>Alteromonadales</taxon>
        <taxon>Psychromonadaceae</taxon>
        <taxon>Psychromonas</taxon>
    </lineage>
</organism>
<protein>
    <recommendedName>
        <fullName evidence="1">4-diphosphocytidyl-2-C-methyl-D-erythritol kinase</fullName>
        <shortName evidence="1">CMK</shortName>
        <ecNumber evidence="1">2.7.1.148</ecNumber>
    </recommendedName>
    <alternativeName>
        <fullName evidence="1">4-(cytidine-5'-diphospho)-2-C-methyl-D-erythritol kinase</fullName>
    </alternativeName>
</protein>
<comment type="function">
    <text evidence="1">Catalyzes the phosphorylation of the position 2 hydroxy group of 4-diphosphocytidyl-2C-methyl-D-erythritol.</text>
</comment>
<comment type="catalytic activity">
    <reaction evidence="1">
        <text>4-CDP-2-C-methyl-D-erythritol + ATP = 4-CDP-2-C-methyl-D-erythritol 2-phosphate + ADP + H(+)</text>
        <dbReference type="Rhea" id="RHEA:18437"/>
        <dbReference type="ChEBI" id="CHEBI:15378"/>
        <dbReference type="ChEBI" id="CHEBI:30616"/>
        <dbReference type="ChEBI" id="CHEBI:57823"/>
        <dbReference type="ChEBI" id="CHEBI:57919"/>
        <dbReference type="ChEBI" id="CHEBI:456216"/>
        <dbReference type="EC" id="2.7.1.148"/>
    </reaction>
</comment>
<comment type="pathway">
    <text evidence="1">Isoprenoid biosynthesis; isopentenyl diphosphate biosynthesis via DXP pathway; isopentenyl diphosphate from 1-deoxy-D-xylulose 5-phosphate: step 3/6.</text>
</comment>
<comment type="similarity">
    <text evidence="1">Belongs to the GHMP kinase family. IspE subfamily.</text>
</comment>
<sequence>MIHNETIRWPAPAKLNLFLYITGQREDGYHELQTLFQFIDLCDYLTITPNLSGKITLTPNIEGLALENNLIYKAAMILKTHTAANNGAHITLEKNLPMGGGLGGGSSDAATTLVALNHQWNINLTKDKLAEIGVLLGADVPVFIFGKAAIAEGIGEKLTPAYPAERSYLIAVPDCHISTAAVFQAKNLIRNTKKRTHLQLINQNWLNDCQPYVKKNYPKVAKVIEWLIEYAPTQLTGTGACVFSTFNSINEAEIVLHNTPDWLAALTAKGLNNSPLNELLATLK</sequence>
<keyword id="KW-0067">ATP-binding</keyword>
<keyword id="KW-0414">Isoprene biosynthesis</keyword>
<keyword id="KW-0418">Kinase</keyword>
<keyword id="KW-0547">Nucleotide-binding</keyword>
<keyword id="KW-1185">Reference proteome</keyword>
<keyword id="KW-0808">Transferase</keyword>
<reference key="1">
    <citation type="journal article" date="2008" name="BMC Genomics">
        <title>Genomics of an extreme psychrophile, Psychromonas ingrahamii.</title>
        <authorList>
            <person name="Riley M."/>
            <person name="Staley J.T."/>
            <person name="Danchin A."/>
            <person name="Wang T.Z."/>
            <person name="Brettin T.S."/>
            <person name="Hauser L.J."/>
            <person name="Land M.L."/>
            <person name="Thompson L.S."/>
        </authorList>
    </citation>
    <scope>NUCLEOTIDE SEQUENCE [LARGE SCALE GENOMIC DNA]</scope>
    <source>
        <strain>DSM 17664 / CCUG 51855 / 37</strain>
    </source>
</reference>